<protein>
    <recommendedName>
        <fullName>Fibroblast growth factor 16</fullName>
        <shortName>FGF16</shortName>
    </recommendedName>
</protein>
<organism>
    <name type="scientific">Danio rerio</name>
    <name type="common">Zebrafish</name>
    <name type="synonym">Brachydanio rerio</name>
    <dbReference type="NCBI Taxonomy" id="7955"/>
    <lineage>
        <taxon>Eukaryota</taxon>
        <taxon>Metazoa</taxon>
        <taxon>Chordata</taxon>
        <taxon>Craniata</taxon>
        <taxon>Vertebrata</taxon>
        <taxon>Euteleostomi</taxon>
        <taxon>Actinopterygii</taxon>
        <taxon>Neopterygii</taxon>
        <taxon>Teleostei</taxon>
        <taxon>Ostariophysi</taxon>
        <taxon>Cypriniformes</taxon>
        <taxon>Danionidae</taxon>
        <taxon>Danioninae</taxon>
        <taxon>Danio</taxon>
    </lineage>
</organism>
<gene>
    <name type="primary">fgf16</name>
</gene>
<name>FGF16_DANRE</name>
<feature type="chain" id="PRO_0000431903" description="Fibroblast growth factor 16">
    <location>
        <begin position="1"/>
        <end position="203"/>
    </location>
</feature>
<comment type="function">
    <text evidence="3 4">Plays a crucial role in pectoral fin bud outgrowth.</text>
</comment>
<comment type="subcellular location">
    <subcellularLocation>
        <location evidence="1">Secreted</location>
    </subcellularLocation>
</comment>
<comment type="developmental stage">
    <text evidence="4">Not clearly detected before 12 and 14 hpf. At 18 and 24 hpf, detected in the otic vesicle, telencephalon, and caudal fin. At 30 and 36 hpf, expressed in the otic vesicle, caudal fin, branchial arch, pectoral fin bud, and pituitary gland.</text>
</comment>
<comment type="disruption phenotype">
    <text evidence="3 4">Fishes shown a severe reduction in the size of the pectoral fins.</text>
</comment>
<comment type="similarity">
    <text evidence="2">Belongs to the heparin-binding growth factors family.</text>
</comment>
<keyword id="KW-0339">Growth factor</keyword>
<keyword id="KW-1185">Reference proteome</keyword>
<keyword id="KW-0964">Secreted</keyword>
<evidence type="ECO:0000250" key="1">
    <source>
        <dbReference type="UniProtKB" id="O54769"/>
    </source>
</evidence>
<evidence type="ECO:0000255" key="2">
    <source>
        <dbReference type="RuleBase" id="RU049442"/>
    </source>
</evidence>
<evidence type="ECO:0000269" key="3">
    <source>
    </source>
</evidence>
<evidence type="ECO:0000269" key="4">
    <source>
    </source>
</evidence>
<sequence>MAEVAGFLGSIDLDLQAFPALGNVPLSDGLNERLGLIEGRLQRGSLTDFGHLKGILRRRQLYCRTGFQLEIFPNGTVHGTRQDHSRFGILEFISLAVGLVSIRGVDAGLYLGMNEKGELYGSKKLTAECVFREQFEENWYNTYASTLFKHADTGRYYYVALNKDGSPREGSRTKKHQKLTHFLPRPVEIEKIPQAYRELFQHR</sequence>
<dbReference type="EMBL" id="AB201764">
    <property type="protein sequence ID" value="BAE79360.1"/>
    <property type="molecule type" value="mRNA"/>
</dbReference>
<dbReference type="EMBL" id="CR855117">
    <property type="status" value="NOT_ANNOTATED_CDS"/>
    <property type="molecule type" value="Genomic_DNA"/>
</dbReference>
<dbReference type="EMBL" id="BC163741">
    <property type="protein sequence ID" value="AAI63741.1"/>
    <property type="molecule type" value="mRNA"/>
</dbReference>
<dbReference type="EMBL" id="BC163752">
    <property type="protein sequence ID" value="AAI63752.1"/>
    <property type="molecule type" value="mRNA"/>
</dbReference>
<dbReference type="RefSeq" id="NP_001035497.1">
    <property type="nucleotide sequence ID" value="NM_001040407.1"/>
</dbReference>
<dbReference type="SMR" id="Q2HXK8"/>
<dbReference type="FunCoup" id="Q2HXK8">
    <property type="interactions" value="503"/>
</dbReference>
<dbReference type="STRING" id="7955.ENSDARP00000061927"/>
<dbReference type="PaxDb" id="7955-ENSDARP00000061927"/>
<dbReference type="Ensembl" id="ENSDART00000061928">
    <property type="protein sequence ID" value="ENSDARP00000061927"/>
    <property type="gene ID" value="ENSDARG00000042233"/>
</dbReference>
<dbReference type="Ensembl" id="ENSDART00000190715">
    <property type="protein sequence ID" value="ENSDARP00000146424"/>
    <property type="gene ID" value="ENSDARG00000110602"/>
</dbReference>
<dbReference type="GeneID" id="692065"/>
<dbReference type="KEGG" id="dre:692065"/>
<dbReference type="AGR" id="ZFIN:ZDB-GENE-060427-3"/>
<dbReference type="CTD" id="8823"/>
<dbReference type="ZFIN" id="ZDB-GENE-060427-3">
    <property type="gene designation" value="fgf16"/>
</dbReference>
<dbReference type="eggNOG" id="KOG3885">
    <property type="taxonomic scope" value="Eukaryota"/>
</dbReference>
<dbReference type="HOGENOM" id="CLU_081609_0_0_1"/>
<dbReference type="InParanoid" id="Q2HXK8"/>
<dbReference type="OMA" id="YKHADTE"/>
<dbReference type="OrthoDB" id="6158176at2759"/>
<dbReference type="PhylomeDB" id="Q2HXK8"/>
<dbReference type="TreeFam" id="TF317805"/>
<dbReference type="Reactome" id="R-DRE-190322">
    <property type="pathway name" value="FGFR4 ligand binding and activation"/>
</dbReference>
<dbReference type="Reactome" id="R-DRE-190372">
    <property type="pathway name" value="FGFR3c ligand binding and activation"/>
</dbReference>
<dbReference type="Reactome" id="R-DRE-190375">
    <property type="pathway name" value="FGFR2c ligand binding and activation"/>
</dbReference>
<dbReference type="Reactome" id="R-DRE-5654221">
    <property type="pathway name" value="Phospholipase C-mediated cascade, FGFR2"/>
</dbReference>
<dbReference type="Reactome" id="R-DRE-5654227">
    <property type="pathway name" value="Phospholipase C-mediated cascade, FGFR3"/>
</dbReference>
<dbReference type="Reactome" id="R-DRE-5654228">
    <property type="pathway name" value="Phospholipase C-mediated cascade, FGFR4"/>
</dbReference>
<dbReference type="Reactome" id="R-DRE-5654699">
    <property type="pathway name" value="SHC-mediated cascade:FGFR2"/>
</dbReference>
<dbReference type="Reactome" id="R-DRE-5654700">
    <property type="pathway name" value="FRS-mediated FGFR2 signaling"/>
</dbReference>
<dbReference type="Reactome" id="R-DRE-5654704">
    <property type="pathway name" value="SHC-mediated cascade:FGFR3"/>
</dbReference>
<dbReference type="Reactome" id="R-DRE-5654706">
    <property type="pathway name" value="FRS-mediated FGFR3 signaling"/>
</dbReference>
<dbReference type="Reactome" id="R-DRE-5654712">
    <property type="pathway name" value="FRS-mediated FGFR4 signaling"/>
</dbReference>
<dbReference type="Reactome" id="R-DRE-5673001">
    <property type="pathway name" value="RAF/MAP kinase cascade"/>
</dbReference>
<dbReference type="PRO" id="PR:Q2HXK8"/>
<dbReference type="Proteomes" id="UP000000437">
    <property type="component" value="Alternate scaffold 14"/>
</dbReference>
<dbReference type="Proteomes" id="UP000000437">
    <property type="component" value="Chromosome 14"/>
</dbReference>
<dbReference type="Bgee" id="ENSDARG00000042233">
    <property type="expression patterns" value="Expressed in larva"/>
</dbReference>
<dbReference type="GO" id="GO:0005737">
    <property type="term" value="C:cytoplasm"/>
    <property type="evidence" value="ECO:0000318"/>
    <property type="project" value="GO_Central"/>
</dbReference>
<dbReference type="GO" id="GO:0005615">
    <property type="term" value="C:extracellular space"/>
    <property type="evidence" value="ECO:0000318"/>
    <property type="project" value="GO_Central"/>
</dbReference>
<dbReference type="GO" id="GO:0005104">
    <property type="term" value="F:fibroblast growth factor receptor binding"/>
    <property type="evidence" value="ECO:0000318"/>
    <property type="project" value="GO_Central"/>
</dbReference>
<dbReference type="GO" id="GO:0008083">
    <property type="term" value="F:growth factor activity"/>
    <property type="evidence" value="ECO:0000318"/>
    <property type="project" value="GO_Central"/>
</dbReference>
<dbReference type="GO" id="GO:0008283">
    <property type="term" value="P:cell population proliferation"/>
    <property type="evidence" value="ECO:0000315"/>
    <property type="project" value="ZFIN"/>
</dbReference>
<dbReference type="GO" id="GO:0021846">
    <property type="term" value="P:cell proliferation in forebrain"/>
    <property type="evidence" value="ECO:0000315"/>
    <property type="project" value="ZFIN"/>
</dbReference>
<dbReference type="GO" id="GO:0033278">
    <property type="term" value="P:cell proliferation in midbrain"/>
    <property type="evidence" value="ECO:0000315"/>
    <property type="project" value="ZFIN"/>
</dbReference>
<dbReference type="GO" id="GO:0021536">
    <property type="term" value="P:diencephalon development"/>
    <property type="evidence" value="ECO:0000315"/>
    <property type="project" value="ZFIN"/>
</dbReference>
<dbReference type="GO" id="GO:0008543">
    <property type="term" value="P:fibroblast growth factor receptor signaling pathway"/>
    <property type="evidence" value="ECO:0000318"/>
    <property type="project" value="GO_Central"/>
</dbReference>
<dbReference type="GO" id="GO:0030900">
    <property type="term" value="P:forebrain development"/>
    <property type="evidence" value="ECO:0000315"/>
    <property type="project" value="ZFIN"/>
</dbReference>
<dbReference type="GO" id="GO:0097154">
    <property type="term" value="P:GABAergic neuron differentiation"/>
    <property type="evidence" value="ECO:0000315"/>
    <property type="project" value="ZFIN"/>
</dbReference>
<dbReference type="GO" id="GO:0022008">
    <property type="term" value="P:neurogenesis"/>
    <property type="evidence" value="ECO:0000318"/>
    <property type="project" value="GO_Central"/>
</dbReference>
<dbReference type="GO" id="GO:0048709">
    <property type="term" value="P:oligodendrocyte differentiation"/>
    <property type="evidence" value="ECO:0000315"/>
    <property type="project" value="ZFIN"/>
</dbReference>
<dbReference type="GO" id="GO:0033339">
    <property type="term" value="P:pectoral fin development"/>
    <property type="evidence" value="ECO:0000315"/>
    <property type="project" value="ZFIN"/>
</dbReference>
<dbReference type="GO" id="GO:0035138">
    <property type="term" value="P:pectoral fin morphogenesis"/>
    <property type="evidence" value="ECO:0000315"/>
    <property type="project" value="ZFIN"/>
</dbReference>
<dbReference type="GO" id="GO:0008284">
    <property type="term" value="P:positive regulation of cell population proliferation"/>
    <property type="evidence" value="ECO:0000318"/>
    <property type="project" value="GO_Central"/>
</dbReference>
<dbReference type="GO" id="GO:0043410">
    <property type="term" value="P:positive regulation of MAPK cascade"/>
    <property type="evidence" value="ECO:0000318"/>
    <property type="project" value="GO_Central"/>
</dbReference>
<dbReference type="GO" id="GO:0030334">
    <property type="term" value="P:regulation of cell migration"/>
    <property type="evidence" value="ECO:0000318"/>
    <property type="project" value="GO_Central"/>
</dbReference>
<dbReference type="GO" id="GO:0021544">
    <property type="term" value="P:subpallium development"/>
    <property type="evidence" value="ECO:0000315"/>
    <property type="project" value="ZFIN"/>
</dbReference>
<dbReference type="FunFam" id="2.80.10.50:FF:000004">
    <property type="entry name" value="Fibroblast growth factor"/>
    <property type="match status" value="1"/>
</dbReference>
<dbReference type="Gene3D" id="2.80.10.50">
    <property type="match status" value="1"/>
</dbReference>
<dbReference type="InterPro" id="IPR002209">
    <property type="entry name" value="Fibroblast_GF_fam"/>
</dbReference>
<dbReference type="InterPro" id="IPR008996">
    <property type="entry name" value="IL1/FGF"/>
</dbReference>
<dbReference type="PANTHER" id="PTHR11486">
    <property type="entry name" value="FIBROBLAST GROWTH FACTOR"/>
    <property type="match status" value="1"/>
</dbReference>
<dbReference type="Pfam" id="PF00167">
    <property type="entry name" value="FGF"/>
    <property type="match status" value="1"/>
</dbReference>
<dbReference type="PRINTS" id="PR00263">
    <property type="entry name" value="HBGFFGF"/>
</dbReference>
<dbReference type="PRINTS" id="PR00262">
    <property type="entry name" value="IL1HBGF"/>
</dbReference>
<dbReference type="SMART" id="SM00442">
    <property type="entry name" value="FGF"/>
    <property type="match status" value="1"/>
</dbReference>
<dbReference type="SUPFAM" id="SSF50353">
    <property type="entry name" value="Cytokine"/>
    <property type="match status" value="1"/>
</dbReference>
<dbReference type="PROSITE" id="PS00247">
    <property type="entry name" value="HBGF_FGF"/>
    <property type="match status" value="1"/>
</dbReference>
<proteinExistence type="evidence at transcript level"/>
<accession>Q2HXK8</accession>
<reference key="1">
    <citation type="journal article" date="2006" name="Biochem. Biophys. Res. Commun.">
        <title>Fgf16 is essential for pectoral fin bud formation in zebrafish.</title>
        <authorList>
            <person name="Nomura R."/>
            <person name="Kamei E."/>
            <person name="Hotta Y."/>
            <person name="Konishi M."/>
            <person name="Miyake A."/>
            <person name="Itoh N."/>
        </authorList>
    </citation>
    <scope>NUCLEOTIDE SEQUENCE [MRNA]</scope>
    <scope>DEVELOPMENTAL STAGE</scope>
    <scope>FUNCTION</scope>
    <scope>DISRUPTION PHENOTYPE</scope>
</reference>
<reference key="2">
    <citation type="journal article" date="2013" name="Nature">
        <title>The zebrafish reference genome sequence and its relationship to the human genome.</title>
        <authorList>
            <person name="Howe K."/>
            <person name="Clark M.D."/>
            <person name="Torroja C.F."/>
            <person name="Torrance J."/>
            <person name="Berthelot C."/>
            <person name="Muffato M."/>
            <person name="Collins J.E."/>
            <person name="Humphray S."/>
            <person name="McLaren K."/>
            <person name="Matthews L."/>
            <person name="McLaren S."/>
            <person name="Sealy I."/>
            <person name="Caccamo M."/>
            <person name="Churcher C."/>
            <person name="Scott C."/>
            <person name="Barrett J.C."/>
            <person name="Koch R."/>
            <person name="Rauch G.J."/>
            <person name="White S."/>
            <person name="Chow W."/>
            <person name="Kilian B."/>
            <person name="Quintais L.T."/>
            <person name="Guerra-Assuncao J.A."/>
            <person name="Zhou Y."/>
            <person name="Gu Y."/>
            <person name="Yen J."/>
            <person name="Vogel J.H."/>
            <person name="Eyre T."/>
            <person name="Redmond S."/>
            <person name="Banerjee R."/>
            <person name="Chi J."/>
            <person name="Fu B."/>
            <person name="Langley E."/>
            <person name="Maguire S.F."/>
            <person name="Laird G.K."/>
            <person name="Lloyd D."/>
            <person name="Kenyon E."/>
            <person name="Donaldson S."/>
            <person name="Sehra H."/>
            <person name="Almeida-King J."/>
            <person name="Loveland J."/>
            <person name="Trevanion S."/>
            <person name="Jones M."/>
            <person name="Quail M."/>
            <person name="Willey D."/>
            <person name="Hunt A."/>
            <person name="Burton J."/>
            <person name="Sims S."/>
            <person name="McLay K."/>
            <person name="Plumb B."/>
            <person name="Davis J."/>
            <person name="Clee C."/>
            <person name="Oliver K."/>
            <person name="Clark R."/>
            <person name="Riddle C."/>
            <person name="Elliot D."/>
            <person name="Threadgold G."/>
            <person name="Harden G."/>
            <person name="Ware D."/>
            <person name="Begum S."/>
            <person name="Mortimore B."/>
            <person name="Kerry G."/>
            <person name="Heath P."/>
            <person name="Phillimore B."/>
            <person name="Tracey A."/>
            <person name="Corby N."/>
            <person name="Dunn M."/>
            <person name="Johnson C."/>
            <person name="Wood J."/>
            <person name="Clark S."/>
            <person name="Pelan S."/>
            <person name="Griffiths G."/>
            <person name="Smith M."/>
            <person name="Glithero R."/>
            <person name="Howden P."/>
            <person name="Barker N."/>
            <person name="Lloyd C."/>
            <person name="Stevens C."/>
            <person name="Harley J."/>
            <person name="Holt K."/>
            <person name="Panagiotidis G."/>
            <person name="Lovell J."/>
            <person name="Beasley H."/>
            <person name="Henderson C."/>
            <person name="Gordon D."/>
            <person name="Auger K."/>
            <person name="Wright D."/>
            <person name="Collins J."/>
            <person name="Raisen C."/>
            <person name="Dyer L."/>
            <person name="Leung K."/>
            <person name="Robertson L."/>
            <person name="Ambridge K."/>
            <person name="Leongamornlert D."/>
            <person name="McGuire S."/>
            <person name="Gilderthorp R."/>
            <person name="Griffiths C."/>
            <person name="Manthravadi D."/>
            <person name="Nichol S."/>
            <person name="Barker G."/>
            <person name="Whitehead S."/>
            <person name="Kay M."/>
            <person name="Brown J."/>
            <person name="Murnane C."/>
            <person name="Gray E."/>
            <person name="Humphries M."/>
            <person name="Sycamore N."/>
            <person name="Barker D."/>
            <person name="Saunders D."/>
            <person name="Wallis J."/>
            <person name="Babbage A."/>
            <person name="Hammond S."/>
            <person name="Mashreghi-Mohammadi M."/>
            <person name="Barr L."/>
            <person name="Martin S."/>
            <person name="Wray P."/>
            <person name="Ellington A."/>
            <person name="Matthews N."/>
            <person name="Ellwood M."/>
            <person name="Woodmansey R."/>
            <person name="Clark G."/>
            <person name="Cooper J."/>
            <person name="Tromans A."/>
            <person name="Grafham D."/>
            <person name="Skuce C."/>
            <person name="Pandian R."/>
            <person name="Andrews R."/>
            <person name="Harrison E."/>
            <person name="Kimberley A."/>
            <person name="Garnett J."/>
            <person name="Fosker N."/>
            <person name="Hall R."/>
            <person name="Garner P."/>
            <person name="Kelly D."/>
            <person name="Bird C."/>
            <person name="Palmer S."/>
            <person name="Gehring I."/>
            <person name="Berger A."/>
            <person name="Dooley C.M."/>
            <person name="Ersan-Urun Z."/>
            <person name="Eser C."/>
            <person name="Geiger H."/>
            <person name="Geisler M."/>
            <person name="Karotki L."/>
            <person name="Kirn A."/>
            <person name="Konantz J."/>
            <person name="Konantz M."/>
            <person name="Oberlander M."/>
            <person name="Rudolph-Geiger S."/>
            <person name="Teucke M."/>
            <person name="Lanz C."/>
            <person name="Raddatz G."/>
            <person name="Osoegawa K."/>
            <person name="Zhu B."/>
            <person name="Rapp A."/>
            <person name="Widaa S."/>
            <person name="Langford C."/>
            <person name="Yang F."/>
            <person name="Schuster S.C."/>
            <person name="Carter N.P."/>
            <person name="Harrow J."/>
            <person name="Ning Z."/>
            <person name="Herrero J."/>
            <person name="Searle S.M."/>
            <person name="Enright A."/>
            <person name="Geisler R."/>
            <person name="Plasterk R.H."/>
            <person name="Lee C."/>
            <person name="Westerfield M."/>
            <person name="de Jong P.J."/>
            <person name="Zon L.I."/>
            <person name="Postlethwait J.H."/>
            <person name="Nusslein-Volhard C."/>
            <person name="Hubbard T.J."/>
            <person name="Roest Crollius H."/>
            <person name="Rogers J."/>
            <person name="Stemple D.L."/>
        </authorList>
    </citation>
    <scope>NUCLEOTIDE SEQUENCE [LARGE SCALE GENOMIC DNA]</scope>
    <source>
        <strain>Tuebingen</strain>
    </source>
</reference>
<reference key="3">
    <citation type="submission" date="2008-04" db="EMBL/GenBank/DDBJ databases">
        <authorList>
            <consortium name="NIH - Zebrafish Gene Collection (ZGC) project"/>
        </authorList>
    </citation>
    <scope>NUCLEOTIDE SEQUENCE [LARGE SCALE MRNA]</scope>
</reference>
<reference key="4">
    <citation type="journal article" date="2014" name="Mol. Genet. Genomic Med.">
        <title>Identification of three novel FGF16 mutations in X-linked recessive fusion of the fourth and fifth metacarpals and possible correlation with heart disease.</title>
        <authorList>
            <person name="Laurell T."/>
            <person name="Nilsson D."/>
            <person name="Hofmeister W."/>
            <person name="Lindstrand A."/>
            <person name="Ahituv N."/>
            <person name="Vandermeer J."/>
            <person name="Amilon A."/>
            <person name="Anneren G."/>
            <person name="Arner M."/>
            <person name="Pettersson M."/>
            <person name="Jaentti N."/>
            <person name="Rosberg H.E."/>
            <person name="Cattini P.A."/>
            <person name="Nordenskjoeld A."/>
            <person name="Maekitie O."/>
            <person name="Grigelioniene G."/>
            <person name="Nordgren A."/>
        </authorList>
    </citation>
    <scope>FUNCTION</scope>
    <scope>DISRUPTION PHENOTYPE</scope>
</reference>